<accession>Q59WK2</accession>
<accession>A0A1D8PF27</accession>
<accession>Q59JW3</accession>
<comment type="function">
    <text evidence="1">Acts as a sulfur carrier required for 2-thiolation of mcm(5)S(2)U at tRNA wobble positions of cytosolic tRNA(Lys), tRNA(Glu) and tRNA(Gln). Serves as sulfur donor in tRNA 2-thiolation reaction by being thiocarboxylated (-COSH) at its C-terminus by the MOCS3 homolog UBA4. The sulfur is then transferred to tRNA to form 2-thiolation of mcm(5)S(2)U. Prior mcm(5) tRNA modification by the elongator complex is required for 2-thiolation. Also acts as a ubiquitin-like protein (UBL) that is covalently conjugated via an isopeptide bond to lysine residues of target proteins such as AHP1. The thiocarboxylated form serves as substrate for conjugation and oxidative stress specifically induces the formation of UBL-protein conjugates.</text>
</comment>
<comment type="pathway">
    <text evidence="1">tRNA modification; 5-methoxycarbonylmethyl-2-thiouridine-tRNA biosynthesis.</text>
</comment>
<comment type="subcellular location">
    <subcellularLocation>
        <location evidence="1">Cytoplasm</location>
    </subcellularLocation>
</comment>
<comment type="PTM">
    <text evidence="1">C-terminal thiocarboxylation occurs in 2 steps, it is first acyl-adenylated (-COAMP) via the hesA/moeB/thiF part of UBA4, then thiocarboxylated (-COSH) via the rhodanese domain of UBA4.</text>
</comment>
<comment type="similarity">
    <text evidence="1">Belongs to the URM1 family.</text>
</comment>
<proteinExistence type="inferred from homology"/>
<gene>
    <name evidence="1" type="primary">URM1</name>
    <name type="ordered locus">CAALFM_C111160CA</name>
    <name type="ORF">CaO19.1016</name>
    <name type="ORF">CaO19.2299</name>
    <name type="ORF">CaO19.9835</name>
</gene>
<name>URM1_CANAL</name>
<keyword id="KW-0963">Cytoplasm</keyword>
<keyword id="KW-1017">Isopeptide bond</keyword>
<keyword id="KW-1185">Reference proteome</keyword>
<keyword id="KW-0819">tRNA processing</keyword>
<keyword id="KW-0833">Ubl conjugation pathway</keyword>
<sequence>MAIKIKVEFLGGLDIISNSVREHKCVIPFEEGEATVADLITYITKNIISDPKDIPVFIEDGTVRPGILVLINDTDWELEGMEEYVIESGDVFTFTSTLHGG</sequence>
<dbReference type="EMBL" id="CP017623">
    <property type="protein sequence ID" value="AOW26742.1"/>
    <property type="molecule type" value="Genomic_DNA"/>
</dbReference>
<dbReference type="RefSeq" id="XP_713904.2">
    <property type="nucleotide sequence ID" value="XM_708811.2"/>
</dbReference>
<dbReference type="SMR" id="Q59WK2"/>
<dbReference type="FunCoup" id="Q59WK2">
    <property type="interactions" value="939"/>
</dbReference>
<dbReference type="STRING" id="237561.Q59WK2"/>
<dbReference type="EnsemblFungi" id="C1_11160C_A-T">
    <property type="protein sequence ID" value="C1_11160C_A-T-p1"/>
    <property type="gene ID" value="C1_11160C_A"/>
</dbReference>
<dbReference type="GeneID" id="3644399"/>
<dbReference type="KEGG" id="cal:CAALFM_C111160CA"/>
<dbReference type="CGD" id="CAL0000198786">
    <property type="gene designation" value="orf19.9835"/>
</dbReference>
<dbReference type="VEuPathDB" id="FungiDB:C1_11160C_A"/>
<dbReference type="eggNOG" id="KOG4146">
    <property type="taxonomic scope" value="Eukaryota"/>
</dbReference>
<dbReference type="HOGENOM" id="CLU_148208_0_0_1"/>
<dbReference type="InParanoid" id="Q59WK2"/>
<dbReference type="OMA" id="IHFMAEK"/>
<dbReference type="OrthoDB" id="10248987at2759"/>
<dbReference type="UniPathway" id="UPA00988"/>
<dbReference type="PRO" id="PR:Q59WK2"/>
<dbReference type="Proteomes" id="UP000000559">
    <property type="component" value="Chromosome 1"/>
</dbReference>
<dbReference type="GO" id="GO:0005829">
    <property type="term" value="C:cytosol"/>
    <property type="evidence" value="ECO:0007669"/>
    <property type="project" value="UniProtKB-UniRule"/>
</dbReference>
<dbReference type="GO" id="GO:0005634">
    <property type="term" value="C:nucleus"/>
    <property type="evidence" value="ECO:0000318"/>
    <property type="project" value="GO_Central"/>
</dbReference>
<dbReference type="GO" id="GO:0042803">
    <property type="term" value="F:protein homodimerization activity"/>
    <property type="evidence" value="ECO:0007669"/>
    <property type="project" value="EnsemblFungi"/>
</dbReference>
<dbReference type="GO" id="GO:0031386">
    <property type="term" value="F:protein tag activity"/>
    <property type="evidence" value="ECO:0000318"/>
    <property type="project" value="GO_Central"/>
</dbReference>
<dbReference type="GO" id="GO:0097163">
    <property type="term" value="F:sulfur carrier activity"/>
    <property type="evidence" value="ECO:0007669"/>
    <property type="project" value="EnsemblFungi"/>
</dbReference>
<dbReference type="GO" id="GO:0007114">
    <property type="term" value="P:cell budding"/>
    <property type="evidence" value="ECO:0007669"/>
    <property type="project" value="EnsemblFungi"/>
</dbReference>
<dbReference type="GO" id="GO:0034599">
    <property type="term" value="P:cellular response to oxidative stress"/>
    <property type="evidence" value="ECO:0007669"/>
    <property type="project" value="EnsemblFungi"/>
</dbReference>
<dbReference type="GO" id="GO:0001403">
    <property type="term" value="P:invasive growth in response to glucose limitation"/>
    <property type="evidence" value="ECO:0007669"/>
    <property type="project" value="EnsemblFungi"/>
</dbReference>
<dbReference type="GO" id="GO:0032447">
    <property type="term" value="P:protein urmylation"/>
    <property type="evidence" value="ECO:0000318"/>
    <property type="project" value="GO_Central"/>
</dbReference>
<dbReference type="GO" id="GO:0002143">
    <property type="term" value="P:tRNA wobble position uridine thiolation"/>
    <property type="evidence" value="ECO:0007669"/>
    <property type="project" value="EnsemblFungi"/>
</dbReference>
<dbReference type="CDD" id="cd01764">
    <property type="entry name" value="Ubl_Urm1"/>
    <property type="match status" value="1"/>
</dbReference>
<dbReference type="Gene3D" id="3.10.20.30">
    <property type="match status" value="1"/>
</dbReference>
<dbReference type="HAMAP" id="MF_03048">
    <property type="entry name" value="Urm1"/>
    <property type="match status" value="1"/>
</dbReference>
<dbReference type="InterPro" id="IPR012675">
    <property type="entry name" value="Beta-grasp_dom_sf"/>
</dbReference>
<dbReference type="InterPro" id="IPR016155">
    <property type="entry name" value="Mopterin_synth/thiamin_S_b"/>
</dbReference>
<dbReference type="InterPro" id="IPR015221">
    <property type="entry name" value="Urm1"/>
</dbReference>
<dbReference type="PANTHER" id="PTHR14986">
    <property type="entry name" value="RURM1 PROTEIN"/>
    <property type="match status" value="1"/>
</dbReference>
<dbReference type="Pfam" id="PF09138">
    <property type="entry name" value="Urm1"/>
    <property type="match status" value="1"/>
</dbReference>
<dbReference type="PIRSF" id="PIRSF037379">
    <property type="entry name" value="Ubiquitin-related_modifier_1"/>
    <property type="match status" value="1"/>
</dbReference>
<dbReference type="SUPFAM" id="SSF54285">
    <property type="entry name" value="MoaD/ThiS"/>
    <property type="match status" value="1"/>
</dbReference>
<evidence type="ECO:0000255" key="1">
    <source>
        <dbReference type="HAMAP-Rule" id="MF_03048"/>
    </source>
</evidence>
<organism>
    <name type="scientific">Candida albicans (strain SC5314 / ATCC MYA-2876)</name>
    <name type="common">Yeast</name>
    <dbReference type="NCBI Taxonomy" id="237561"/>
    <lineage>
        <taxon>Eukaryota</taxon>
        <taxon>Fungi</taxon>
        <taxon>Dikarya</taxon>
        <taxon>Ascomycota</taxon>
        <taxon>Saccharomycotina</taxon>
        <taxon>Pichiomycetes</taxon>
        <taxon>Debaryomycetaceae</taxon>
        <taxon>Candida/Lodderomyces clade</taxon>
        <taxon>Candida</taxon>
    </lineage>
</organism>
<reference key="1">
    <citation type="journal article" date="2004" name="Proc. Natl. Acad. Sci. U.S.A.">
        <title>The diploid genome sequence of Candida albicans.</title>
        <authorList>
            <person name="Jones T."/>
            <person name="Federspiel N.A."/>
            <person name="Chibana H."/>
            <person name="Dungan J."/>
            <person name="Kalman S."/>
            <person name="Magee B.B."/>
            <person name="Newport G."/>
            <person name="Thorstenson Y.R."/>
            <person name="Agabian N."/>
            <person name="Magee P.T."/>
            <person name="Davis R.W."/>
            <person name="Scherer S."/>
        </authorList>
    </citation>
    <scope>NUCLEOTIDE SEQUENCE [LARGE SCALE GENOMIC DNA]</scope>
    <source>
        <strain>SC5314 / ATCC MYA-2876</strain>
    </source>
</reference>
<reference key="2">
    <citation type="journal article" date="2007" name="Genome Biol.">
        <title>Assembly of the Candida albicans genome into sixteen supercontigs aligned on the eight chromosomes.</title>
        <authorList>
            <person name="van het Hoog M."/>
            <person name="Rast T.J."/>
            <person name="Martchenko M."/>
            <person name="Grindle S."/>
            <person name="Dignard D."/>
            <person name="Hogues H."/>
            <person name="Cuomo C."/>
            <person name="Berriman M."/>
            <person name="Scherer S."/>
            <person name="Magee B.B."/>
            <person name="Whiteway M."/>
            <person name="Chibana H."/>
            <person name="Nantel A."/>
            <person name="Magee P.T."/>
        </authorList>
    </citation>
    <scope>GENOME REANNOTATION</scope>
    <source>
        <strain>SC5314 / ATCC MYA-2876</strain>
    </source>
</reference>
<reference key="3">
    <citation type="journal article" date="2013" name="Genome Biol.">
        <title>Assembly of a phased diploid Candida albicans genome facilitates allele-specific measurements and provides a simple model for repeat and indel structure.</title>
        <authorList>
            <person name="Muzzey D."/>
            <person name="Schwartz K."/>
            <person name="Weissman J.S."/>
            <person name="Sherlock G."/>
        </authorList>
    </citation>
    <scope>NUCLEOTIDE SEQUENCE [LARGE SCALE GENOMIC DNA]</scope>
    <scope>GENOME REANNOTATION</scope>
    <source>
        <strain>SC5314 / ATCC MYA-2876</strain>
    </source>
</reference>
<feature type="chain" id="PRO_0000367876" description="Ubiquitin-related modifier 1">
    <location>
        <begin position="1"/>
        <end position="101"/>
    </location>
</feature>
<feature type="modified residue" description="1-thioglycine" evidence="1">
    <location>
        <position position="101"/>
    </location>
</feature>
<feature type="cross-link" description="Glycyl lysine isopeptide (Gly-Lys) (interchain with K-? in acceptor proteins)" evidence="1">
    <location>
        <position position="101"/>
    </location>
</feature>
<protein>
    <recommendedName>
        <fullName evidence="1">Ubiquitin-related modifier 1</fullName>
    </recommendedName>
</protein>